<comment type="function">
    <text evidence="1 2">Involved in mitochondrial tRNA methylation (By similarity). Specifically methylates the N1 position of guanosine-37 in various tRNAs. Methylation is not dependent on the nature of the nucleoside 5' of the target nucleoside. This is the first step in the biosynthesis of wybutosine (yW), a modified base adjacent to the anticodon of tRNAs and required for accurate decoding.</text>
</comment>
<comment type="catalytic activity">
    <reaction evidence="2">
        <text>guanosine(37) in tRNA + S-adenosyl-L-methionine = N(1)-methylguanosine(37) in tRNA + S-adenosyl-L-homocysteine + H(+)</text>
        <dbReference type="Rhea" id="RHEA:36899"/>
        <dbReference type="Rhea" id="RHEA-COMP:10145"/>
        <dbReference type="Rhea" id="RHEA-COMP:10147"/>
        <dbReference type="ChEBI" id="CHEBI:15378"/>
        <dbReference type="ChEBI" id="CHEBI:57856"/>
        <dbReference type="ChEBI" id="CHEBI:59789"/>
        <dbReference type="ChEBI" id="CHEBI:73542"/>
        <dbReference type="ChEBI" id="CHEBI:74269"/>
        <dbReference type="EC" id="2.1.1.228"/>
    </reaction>
</comment>
<comment type="subunit">
    <text evidence="2">Monomer.</text>
</comment>
<comment type="subcellular location">
    <subcellularLocation>
        <location evidence="2">Mitochondrion matrix</location>
    </subcellularLocation>
    <subcellularLocation>
        <location evidence="2">Nucleus</location>
    </subcellularLocation>
    <subcellularLocation>
        <location evidence="2">Cytoplasm</location>
    </subcellularLocation>
    <text evidence="2">Predominantly in the mitochondria and in the nucleus.</text>
</comment>
<comment type="similarity">
    <text evidence="4">Belongs to the class I-like SAM-binding methyltransferase superfamily. TRM5/TYW2 family.</text>
</comment>
<protein>
    <recommendedName>
        <fullName evidence="2">tRNA (guanine(37)-N(1))-methyltransferase</fullName>
        <ecNumber evidence="2">2.1.1.228</ecNumber>
    </recommendedName>
    <alternativeName>
        <fullName evidence="2">M1G-methyltransferase</fullName>
    </alternativeName>
    <alternativeName>
        <fullName evidence="2">tRNA [GM37] methyltransferase</fullName>
    </alternativeName>
    <alternativeName>
        <fullName evidence="2">tRNA methyltransferase 5 homolog</fullName>
    </alternativeName>
</protein>
<organism>
    <name type="scientific">Macaca mulatta</name>
    <name type="common">Rhesus macaque</name>
    <dbReference type="NCBI Taxonomy" id="9544"/>
    <lineage>
        <taxon>Eukaryota</taxon>
        <taxon>Metazoa</taxon>
        <taxon>Chordata</taxon>
        <taxon>Craniata</taxon>
        <taxon>Vertebrata</taxon>
        <taxon>Euteleostomi</taxon>
        <taxon>Mammalia</taxon>
        <taxon>Eutheria</taxon>
        <taxon>Euarchontoglires</taxon>
        <taxon>Primates</taxon>
        <taxon>Haplorrhini</taxon>
        <taxon>Catarrhini</taxon>
        <taxon>Cercopithecidae</taxon>
        <taxon>Cercopithecinae</taxon>
        <taxon>Macaca</taxon>
    </lineage>
</organism>
<name>TRM5_MACMU</name>
<evidence type="ECO:0000250" key="1">
    <source>
        <dbReference type="UniProtKB" id="Q32P41"/>
    </source>
</evidence>
<evidence type="ECO:0000255" key="2">
    <source>
        <dbReference type="HAMAP-Rule" id="MF_03152"/>
    </source>
</evidence>
<evidence type="ECO:0000256" key="3">
    <source>
        <dbReference type="SAM" id="MobiDB-lite"/>
    </source>
</evidence>
<evidence type="ECO:0000305" key="4"/>
<feature type="transit peptide" description="Mitochondrion" evidence="2">
    <location>
        <begin position="1"/>
        <end position="57"/>
    </location>
</feature>
<feature type="chain" id="PRO_0000414122" description="tRNA (guanine(37)-N(1))-methyltransferase">
    <location>
        <begin position="58"/>
        <end position="509"/>
    </location>
</feature>
<feature type="region of interest" description="Disordered" evidence="3">
    <location>
        <begin position="478"/>
        <end position="509"/>
    </location>
</feature>
<feature type="binding site" evidence="2">
    <location>
        <position position="289"/>
    </location>
    <ligand>
        <name>S-adenosyl-L-methionine</name>
        <dbReference type="ChEBI" id="CHEBI:59789"/>
    </ligand>
</feature>
<feature type="binding site" evidence="2">
    <location>
        <begin position="327"/>
        <end position="328"/>
    </location>
    <ligand>
        <name>S-adenosyl-L-methionine</name>
        <dbReference type="ChEBI" id="CHEBI:59789"/>
    </ligand>
</feature>
<feature type="binding site" evidence="2">
    <location>
        <begin position="355"/>
        <end position="356"/>
    </location>
    <ligand>
        <name>S-adenosyl-L-methionine</name>
        <dbReference type="ChEBI" id="CHEBI:59789"/>
    </ligand>
</feature>
<feature type="binding site" evidence="2">
    <location>
        <position position="387"/>
    </location>
    <ligand>
        <name>S-adenosyl-L-methionine</name>
        <dbReference type="ChEBI" id="CHEBI:59789"/>
    </ligand>
</feature>
<accession>F7GSQ4</accession>
<dbReference type="EC" id="2.1.1.228" evidence="2"/>
<dbReference type="RefSeq" id="NP_001248547.1">
    <property type="nucleotide sequence ID" value="NM_001261618.1"/>
</dbReference>
<dbReference type="SMR" id="F7GSQ4"/>
<dbReference type="FunCoup" id="F7GSQ4">
    <property type="interactions" value="2277"/>
</dbReference>
<dbReference type="STRING" id="9544.ENSMMUP00000047637"/>
<dbReference type="PaxDb" id="9544-ENSMMUP00000017899"/>
<dbReference type="Ensembl" id="ENSMMUT00000078967.2">
    <property type="protein sequence ID" value="ENSMMUP00000047637.2"/>
    <property type="gene ID" value="ENSMMUG00000013611.4"/>
</dbReference>
<dbReference type="GeneID" id="704146"/>
<dbReference type="KEGG" id="mcc:704146"/>
<dbReference type="CTD" id="57570"/>
<dbReference type="VEuPathDB" id="HostDB:ENSMMUG00000013611"/>
<dbReference type="VGNC" id="VGNC:99335">
    <property type="gene designation" value="TRMT5"/>
</dbReference>
<dbReference type="eggNOG" id="KOG2078">
    <property type="taxonomic scope" value="Eukaryota"/>
</dbReference>
<dbReference type="GeneTree" id="ENSGT00940000153304"/>
<dbReference type="HOGENOM" id="CLU_022610_2_3_1"/>
<dbReference type="InParanoid" id="F7GSQ4"/>
<dbReference type="OMA" id="VGSHSQF"/>
<dbReference type="OrthoDB" id="408788at2759"/>
<dbReference type="TreeFam" id="TF315073"/>
<dbReference type="Proteomes" id="UP000006718">
    <property type="component" value="Chromosome 7"/>
</dbReference>
<dbReference type="Bgee" id="ENSMMUG00000013611">
    <property type="expression patterns" value="Expressed in spermatid and 22 other cell types or tissues"/>
</dbReference>
<dbReference type="ExpressionAtlas" id="F7GSQ4">
    <property type="expression patterns" value="baseline"/>
</dbReference>
<dbReference type="GO" id="GO:0005737">
    <property type="term" value="C:cytoplasm"/>
    <property type="evidence" value="ECO:0000318"/>
    <property type="project" value="GO_Central"/>
</dbReference>
<dbReference type="GO" id="GO:0005759">
    <property type="term" value="C:mitochondrial matrix"/>
    <property type="evidence" value="ECO:0000250"/>
    <property type="project" value="UniProtKB"/>
</dbReference>
<dbReference type="GO" id="GO:0005634">
    <property type="term" value="C:nucleus"/>
    <property type="evidence" value="ECO:0007669"/>
    <property type="project" value="UniProtKB-SubCell"/>
</dbReference>
<dbReference type="GO" id="GO:0052906">
    <property type="term" value="F:tRNA (guanine(37)-N1)-methyltransferase activity"/>
    <property type="evidence" value="ECO:0007669"/>
    <property type="project" value="UniProtKB-UniRule"/>
</dbReference>
<dbReference type="GO" id="GO:0008175">
    <property type="term" value="F:tRNA methyltransferase activity"/>
    <property type="evidence" value="ECO:0000318"/>
    <property type="project" value="GO_Central"/>
</dbReference>
<dbReference type="GO" id="GO:0070901">
    <property type="term" value="P:mitochondrial tRNA methylation"/>
    <property type="evidence" value="ECO:0000250"/>
    <property type="project" value="UniProtKB"/>
</dbReference>
<dbReference type="GO" id="GO:0002939">
    <property type="term" value="P:tRNA N1-guanine methylation"/>
    <property type="evidence" value="ECO:0000318"/>
    <property type="project" value="GO_Central"/>
</dbReference>
<dbReference type="FunFam" id="3.30.300.110:FF:000001">
    <property type="entry name" value="tRNA (guanine(37)-N1)-methyltransferase"/>
    <property type="match status" value="1"/>
</dbReference>
<dbReference type="FunFam" id="3.40.50.150:FF:000102">
    <property type="entry name" value="tRNA (guanine(37)-N1)-methyltransferase"/>
    <property type="match status" value="1"/>
</dbReference>
<dbReference type="Gene3D" id="3.30.300.110">
    <property type="entry name" value="Met-10+ protein-like domains"/>
    <property type="match status" value="1"/>
</dbReference>
<dbReference type="Gene3D" id="3.40.50.150">
    <property type="entry name" value="Vaccinia Virus protein VP39"/>
    <property type="match status" value="1"/>
</dbReference>
<dbReference type="HAMAP" id="MF_03152">
    <property type="entry name" value="TRM5"/>
    <property type="match status" value="1"/>
</dbReference>
<dbReference type="InterPro" id="IPR030382">
    <property type="entry name" value="MeTrfase_TRM5/TYW2"/>
</dbReference>
<dbReference type="InterPro" id="IPR029063">
    <property type="entry name" value="SAM-dependent_MTases_sf"/>
</dbReference>
<dbReference type="InterPro" id="IPR056743">
    <property type="entry name" value="TRM5-TYW2-like_MTfase"/>
</dbReference>
<dbReference type="InterPro" id="IPR056744">
    <property type="entry name" value="TRM5/TYW2-like_N"/>
</dbReference>
<dbReference type="InterPro" id="IPR025792">
    <property type="entry name" value="tRNA_Gua_MeTrfase_euk"/>
</dbReference>
<dbReference type="PANTHER" id="PTHR23245:SF36">
    <property type="entry name" value="TRNA (GUANINE(37)-N1)-METHYLTRANSFERASE"/>
    <property type="match status" value="1"/>
</dbReference>
<dbReference type="PANTHER" id="PTHR23245">
    <property type="entry name" value="TRNA METHYLTRANSFERASE"/>
    <property type="match status" value="1"/>
</dbReference>
<dbReference type="Pfam" id="PF02475">
    <property type="entry name" value="TRM5-TYW2_MTfase"/>
    <property type="match status" value="1"/>
</dbReference>
<dbReference type="Pfam" id="PF25133">
    <property type="entry name" value="TYW2_N_2"/>
    <property type="match status" value="1"/>
</dbReference>
<dbReference type="SUPFAM" id="SSF53335">
    <property type="entry name" value="S-adenosyl-L-methionine-dependent methyltransferases"/>
    <property type="match status" value="1"/>
</dbReference>
<dbReference type="PROSITE" id="PS51684">
    <property type="entry name" value="SAM_MT_TRM5_TYW2"/>
    <property type="match status" value="1"/>
</dbReference>
<sequence length="509" mass="58277">MVLWILWRPFGFSRRLLKLERHSITESKSLIPLAWTSLTQTLSESPGIFLLGQRKRFSTMPEIETHERDSELFSPPSDVRGMTKLDRTAFKKTVNIPVLKVRKEIVSRLMRSLRRAALQRPGIKRVIEDPEDKESRLILLDPYKIFTHDSFEKAELSVLEQLNVSPQISKYNLELTYENFKSEEILRAVLPEGQDVTSGFSRVGHIAHLNLRDHQLPFKQLIGQVMIDKNPGITSAVNKINNIDNMYRNFHMEVLSGEQNMMTKVRENKYTYEFDFSKVYWNPRLSTEHSRITELLKAGDVLFDVFAGVGPFAIPVAKKNCTVFANDLNPESHKWLLHNCKLNKVDQKVKIFNLDGKDFLQGPVKEELIQLLSLSKERKPSVHIVMNLPAKAIEFLSAFKWLLDGQPCSNEFLPIVHCYSFSKDANPAKDVRQRAGAVLGISLEACSSVHLVRNVAPNKEMLCITFQIPAAVLYKNQTKNPENHEDPPLKRQRTAEAFSDEKTQIASNT</sequence>
<keyword id="KW-0963">Cytoplasm</keyword>
<keyword id="KW-0489">Methyltransferase</keyword>
<keyword id="KW-0496">Mitochondrion</keyword>
<keyword id="KW-0539">Nucleus</keyword>
<keyword id="KW-1185">Reference proteome</keyword>
<keyword id="KW-0949">S-adenosyl-L-methionine</keyword>
<keyword id="KW-0808">Transferase</keyword>
<keyword id="KW-0809">Transit peptide</keyword>
<keyword id="KW-0819">tRNA processing</keyword>
<reference key="1">
    <citation type="journal article" date="2007" name="Science">
        <title>Evolutionary and biomedical insights from the rhesus macaque genome.</title>
        <authorList>
            <person name="Gibbs R.A."/>
            <person name="Rogers J."/>
            <person name="Katze M.G."/>
            <person name="Bumgarner R."/>
            <person name="Weinstock G.M."/>
            <person name="Mardis E.R."/>
            <person name="Remington K.A."/>
            <person name="Strausberg R.L."/>
            <person name="Venter J.C."/>
            <person name="Wilson R.K."/>
            <person name="Batzer M.A."/>
            <person name="Bustamante C.D."/>
            <person name="Eichler E.E."/>
            <person name="Hahn M.W."/>
            <person name="Hardison R.C."/>
            <person name="Makova K.D."/>
            <person name="Miller W."/>
            <person name="Milosavljevic A."/>
            <person name="Palermo R.E."/>
            <person name="Siepel A."/>
            <person name="Sikela J.M."/>
            <person name="Attaway T."/>
            <person name="Bell S."/>
            <person name="Bernard K.E."/>
            <person name="Buhay C.J."/>
            <person name="Chandrabose M.N."/>
            <person name="Dao M."/>
            <person name="Davis C."/>
            <person name="Delehaunty K.D."/>
            <person name="Ding Y."/>
            <person name="Dinh H.H."/>
            <person name="Dugan-Rocha S."/>
            <person name="Fulton L.A."/>
            <person name="Gabisi R.A."/>
            <person name="Garner T.T."/>
            <person name="Godfrey J."/>
            <person name="Hawes A.C."/>
            <person name="Hernandez J."/>
            <person name="Hines S."/>
            <person name="Holder M."/>
            <person name="Hume J."/>
            <person name="Jhangiani S.N."/>
            <person name="Joshi V."/>
            <person name="Khan Z.M."/>
            <person name="Kirkness E.F."/>
            <person name="Cree A."/>
            <person name="Fowler R.G."/>
            <person name="Lee S."/>
            <person name="Lewis L.R."/>
            <person name="Li Z."/>
            <person name="Liu Y.-S."/>
            <person name="Moore S.M."/>
            <person name="Muzny D."/>
            <person name="Nazareth L.V."/>
            <person name="Ngo D.N."/>
            <person name="Okwuonu G.O."/>
            <person name="Pai G."/>
            <person name="Parker D."/>
            <person name="Paul H.A."/>
            <person name="Pfannkoch C."/>
            <person name="Pohl C.S."/>
            <person name="Rogers Y.-H.C."/>
            <person name="Ruiz S.J."/>
            <person name="Sabo A."/>
            <person name="Santibanez J."/>
            <person name="Schneider B.W."/>
            <person name="Smith S.M."/>
            <person name="Sodergren E."/>
            <person name="Svatek A.F."/>
            <person name="Utterback T.R."/>
            <person name="Vattathil S."/>
            <person name="Warren W."/>
            <person name="White C.S."/>
            <person name="Chinwalla A.T."/>
            <person name="Feng Y."/>
            <person name="Halpern A.L."/>
            <person name="Hillier L.W."/>
            <person name="Huang X."/>
            <person name="Minx P."/>
            <person name="Nelson J.O."/>
            <person name="Pepin K.H."/>
            <person name="Qin X."/>
            <person name="Sutton G.G."/>
            <person name="Venter E."/>
            <person name="Walenz B.P."/>
            <person name="Wallis J.W."/>
            <person name="Worley K.C."/>
            <person name="Yang S.-P."/>
            <person name="Jones S.M."/>
            <person name="Marra M.A."/>
            <person name="Rocchi M."/>
            <person name="Schein J.E."/>
            <person name="Baertsch R."/>
            <person name="Clarke L."/>
            <person name="Csuros M."/>
            <person name="Glasscock J."/>
            <person name="Harris R.A."/>
            <person name="Havlak P."/>
            <person name="Jackson A.R."/>
            <person name="Jiang H."/>
            <person name="Liu Y."/>
            <person name="Messina D.N."/>
            <person name="Shen Y."/>
            <person name="Song H.X.-Z."/>
            <person name="Wylie T."/>
            <person name="Zhang L."/>
            <person name="Birney E."/>
            <person name="Han K."/>
            <person name="Konkel M.K."/>
            <person name="Lee J."/>
            <person name="Smit A.F.A."/>
            <person name="Ullmer B."/>
            <person name="Wang H."/>
            <person name="Xing J."/>
            <person name="Burhans R."/>
            <person name="Cheng Z."/>
            <person name="Karro J.E."/>
            <person name="Ma J."/>
            <person name="Raney B."/>
            <person name="She X."/>
            <person name="Cox M.J."/>
            <person name="Demuth J.P."/>
            <person name="Dumas L.J."/>
            <person name="Han S.-G."/>
            <person name="Hopkins J."/>
            <person name="Karimpour-Fard A."/>
            <person name="Kim Y.H."/>
            <person name="Pollack J.R."/>
            <person name="Vinar T."/>
            <person name="Addo-Quaye C."/>
            <person name="Degenhardt J."/>
            <person name="Denby A."/>
            <person name="Hubisz M.J."/>
            <person name="Indap A."/>
            <person name="Kosiol C."/>
            <person name="Lahn B.T."/>
            <person name="Lawson H.A."/>
            <person name="Marklein A."/>
            <person name="Nielsen R."/>
            <person name="Vallender E.J."/>
            <person name="Clark A.G."/>
            <person name="Ferguson B."/>
            <person name="Hernandez R.D."/>
            <person name="Hirani K."/>
            <person name="Kehrer-Sawatzki H."/>
            <person name="Kolb J."/>
            <person name="Patil S."/>
            <person name="Pu L.-L."/>
            <person name="Ren Y."/>
            <person name="Smith D.G."/>
            <person name="Wheeler D.A."/>
            <person name="Schenck I."/>
            <person name="Ball E.V."/>
            <person name="Chen R."/>
            <person name="Cooper D.N."/>
            <person name="Giardine B."/>
            <person name="Hsu F."/>
            <person name="Kent W.J."/>
            <person name="Lesk A."/>
            <person name="Nelson D.L."/>
            <person name="O'brien W.E."/>
            <person name="Pruefer K."/>
            <person name="Stenson P.D."/>
            <person name="Wallace J.C."/>
            <person name="Ke H."/>
            <person name="Liu X.-M."/>
            <person name="Wang P."/>
            <person name="Xiang A.P."/>
            <person name="Yang F."/>
            <person name="Barber G.P."/>
            <person name="Haussler D."/>
            <person name="Karolchik D."/>
            <person name="Kern A.D."/>
            <person name="Kuhn R.M."/>
            <person name="Smith K.E."/>
            <person name="Zwieg A.S."/>
        </authorList>
    </citation>
    <scope>NUCLEOTIDE SEQUENCE [LARGE SCALE GENOMIC DNA]</scope>
    <source>
        <strain>17573</strain>
    </source>
</reference>
<proteinExistence type="inferred from homology"/>
<gene>
    <name evidence="2" type="primary">TRMT5</name>
    <name evidence="2" type="synonym">TRM5</name>
</gene>